<accession>Q32FJ0</accession>
<organism>
    <name type="scientific">Shigella dysenteriae serotype 1 (strain Sd197)</name>
    <dbReference type="NCBI Taxonomy" id="300267"/>
    <lineage>
        <taxon>Bacteria</taxon>
        <taxon>Pseudomonadati</taxon>
        <taxon>Pseudomonadota</taxon>
        <taxon>Gammaproteobacteria</taxon>
        <taxon>Enterobacterales</taxon>
        <taxon>Enterobacteriaceae</taxon>
        <taxon>Shigella</taxon>
    </lineage>
</organism>
<comment type="function">
    <text evidence="1">Part of the ABC transporter complex BtuCDF involved in vitamin B12 import. Responsible for energy coupling to the transport system.</text>
</comment>
<comment type="catalytic activity">
    <reaction evidence="1">
        <text>an R-cob(III)alamin(out) + ATP + H2O = an R-cob(III)alamin(in) + ADP + phosphate + H(+)</text>
        <dbReference type="Rhea" id="RHEA:17873"/>
        <dbReference type="ChEBI" id="CHEBI:15377"/>
        <dbReference type="ChEBI" id="CHEBI:15378"/>
        <dbReference type="ChEBI" id="CHEBI:30616"/>
        <dbReference type="ChEBI" id="CHEBI:43474"/>
        <dbReference type="ChEBI" id="CHEBI:140785"/>
        <dbReference type="ChEBI" id="CHEBI:456216"/>
        <dbReference type="EC" id="7.6.2.8"/>
    </reaction>
</comment>
<comment type="subunit">
    <text evidence="1">The complex is composed of two ATP-binding proteins (BtuD), two transmembrane proteins (BtuC) and a solute-binding protein (BtuF).</text>
</comment>
<comment type="subcellular location">
    <subcellularLocation>
        <location evidence="1">Cell inner membrane</location>
        <topology evidence="1">Peripheral membrane protein</topology>
    </subcellularLocation>
</comment>
<comment type="similarity">
    <text evidence="1">Belongs to the ABC transporter superfamily. Vitamin B12 importer (TC 3.A.1.13.1) family.</text>
</comment>
<reference key="1">
    <citation type="journal article" date="2005" name="Nucleic Acids Res.">
        <title>Genome dynamics and diversity of Shigella species, the etiologic agents of bacillary dysentery.</title>
        <authorList>
            <person name="Yang F."/>
            <person name="Yang J."/>
            <person name="Zhang X."/>
            <person name="Chen L."/>
            <person name="Jiang Y."/>
            <person name="Yan Y."/>
            <person name="Tang X."/>
            <person name="Wang J."/>
            <person name="Xiong Z."/>
            <person name="Dong J."/>
            <person name="Xue Y."/>
            <person name="Zhu Y."/>
            <person name="Xu X."/>
            <person name="Sun L."/>
            <person name="Chen S."/>
            <person name="Nie H."/>
            <person name="Peng J."/>
            <person name="Xu J."/>
            <person name="Wang Y."/>
            <person name="Yuan Z."/>
            <person name="Wen Y."/>
            <person name="Yao Z."/>
            <person name="Shen Y."/>
            <person name="Qiang B."/>
            <person name="Hou Y."/>
            <person name="Yu J."/>
            <person name="Jin Q."/>
        </authorList>
    </citation>
    <scope>NUCLEOTIDE SEQUENCE [LARGE SCALE GENOMIC DNA]</scope>
    <source>
        <strain>Sd197</strain>
    </source>
</reference>
<feature type="chain" id="PRO_1000083966" description="Vitamin B12 import ATP-binding protein BtuD">
    <location>
        <begin position="1"/>
        <end position="249"/>
    </location>
</feature>
<feature type="domain" description="ABC transporter" evidence="1">
    <location>
        <begin position="1"/>
        <end position="233"/>
    </location>
</feature>
<feature type="binding site" evidence="1">
    <location>
        <begin position="33"/>
        <end position="40"/>
    </location>
    <ligand>
        <name>ATP</name>
        <dbReference type="ChEBI" id="CHEBI:30616"/>
    </ligand>
</feature>
<proteinExistence type="inferred from homology"/>
<gene>
    <name evidence="1" type="primary">btuD</name>
    <name type="ordered locus">SDY_1804</name>
</gene>
<dbReference type="EC" id="7.6.2.8" evidence="1"/>
<dbReference type="EMBL" id="CP000034">
    <property type="protein sequence ID" value="ABB61915.1"/>
    <property type="molecule type" value="Genomic_DNA"/>
</dbReference>
<dbReference type="RefSeq" id="WP_000029466.1">
    <property type="nucleotide sequence ID" value="NC_007606.1"/>
</dbReference>
<dbReference type="RefSeq" id="YP_403406.1">
    <property type="nucleotide sequence ID" value="NC_007606.1"/>
</dbReference>
<dbReference type="SMR" id="Q32FJ0"/>
<dbReference type="STRING" id="300267.SDY_1804"/>
<dbReference type="EnsemblBacteria" id="ABB61915">
    <property type="protein sequence ID" value="ABB61915"/>
    <property type="gene ID" value="SDY_1804"/>
</dbReference>
<dbReference type="GeneID" id="93775873"/>
<dbReference type="KEGG" id="sdy:SDY_1804"/>
<dbReference type="PATRIC" id="fig|300267.13.peg.2176"/>
<dbReference type="HOGENOM" id="CLU_000604_1_11_6"/>
<dbReference type="Proteomes" id="UP000002716">
    <property type="component" value="Chromosome"/>
</dbReference>
<dbReference type="GO" id="GO:0005886">
    <property type="term" value="C:plasma membrane"/>
    <property type="evidence" value="ECO:0007669"/>
    <property type="project" value="UniProtKB-SubCell"/>
</dbReference>
<dbReference type="GO" id="GO:0015420">
    <property type="term" value="F:ABC-type vitamin B12 transporter activity"/>
    <property type="evidence" value="ECO:0007669"/>
    <property type="project" value="UniProtKB-UniRule"/>
</dbReference>
<dbReference type="GO" id="GO:0005524">
    <property type="term" value="F:ATP binding"/>
    <property type="evidence" value="ECO:0007669"/>
    <property type="project" value="UniProtKB-KW"/>
</dbReference>
<dbReference type="GO" id="GO:0016887">
    <property type="term" value="F:ATP hydrolysis activity"/>
    <property type="evidence" value="ECO:0007669"/>
    <property type="project" value="InterPro"/>
</dbReference>
<dbReference type="CDD" id="cd03214">
    <property type="entry name" value="ABC_Iron-Siderophores_B12_Hemin"/>
    <property type="match status" value="1"/>
</dbReference>
<dbReference type="FunFam" id="3.40.50.300:FF:000462">
    <property type="entry name" value="Vitamin B12 import ATP-binding protein BtuD"/>
    <property type="match status" value="1"/>
</dbReference>
<dbReference type="Gene3D" id="3.40.50.300">
    <property type="entry name" value="P-loop containing nucleotide triphosphate hydrolases"/>
    <property type="match status" value="1"/>
</dbReference>
<dbReference type="HAMAP" id="MF_01005">
    <property type="entry name" value="BtuD"/>
    <property type="match status" value="1"/>
</dbReference>
<dbReference type="InterPro" id="IPR003593">
    <property type="entry name" value="AAA+_ATPase"/>
</dbReference>
<dbReference type="InterPro" id="IPR003439">
    <property type="entry name" value="ABC_transporter-like_ATP-bd"/>
</dbReference>
<dbReference type="InterPro" id="IPR017871">
    <property type="entry name" value="ABC_transporter-like_CS"/>
</dbReference>
<dbReference type="InterPro" id="IPR023693">
    <property type="entry name" value="ABC_transptr_BtuD"/>
</dbReference>
<dbReference type="InterPro" id="IPR050153">
    <property type="entry name" value="Metal_Ion_Import_ABC"/>
</dbReference>
<dbReference type="InterPro" id="IPR027417">
    <property type="entry name" value="P-loop_NTPase"/>
</dbReference>
<dbReference type="NCBIfam" id="NF002981">
    <property type="entry name" value="PRK03695.1"/>
    <property type="match status" value="1"/>
</dbReference>
<dbReference type="PANTHER" id="PTHR42734">
    <property type="entry name" value="METAL TRANSPORT SYSTEM ATP-BINDING PROTEIN TM_0124-RELATED"/>
    <property type="match status" value="1"/>
</dbReference>
<dbReference type="PANTHER" id="PTHR42734:SF18">
    <property type="entry name" value="VITAMIN B12 IMPORT ATP-BINDING PROTEIN BTUD"/>
    <property type="match status" value="1"/>
</dbReference>
<dbReference type="Pfam" id="PF00005">
    <property type="entry name" value="ABC_tran"/>
    <property type="match status" value="1"/>
</dbReference>
<dbReference type="SMART" id="SM00382">
    <property type="entry name" value="AAA"/>
    <property type="match status" value="1"/>
</dbReference>
<dbReference type="SUPFAM" id="SSF52540">
    <property type="entry name" value="P-loop containing nucleoside triphosphate hydrolases"/>
    <property type="match status" value="1"/>
</dbReference>
<dbReference type="PROSITE" id="PS00211">
    <property type="entry name" value="ABC_TRANSPORTER_1"/>
    <property type="match status" value="1"/>
</dbReference>
<dbReference type="PROSITE" id="PS50893">
    <property type="entry name" value="ABC_TRANSPORTER_2"/>
    <property type="match status" value="1"/>
</dbReference>
<evidence type="ECO:0000255" key="1">
    <source>
        <dbReference type="HAMAP-Rule" id="MF_01005"/>
    </source>
</evidence>
<protein>
    <recommendedName>
        <fullName evidence="1">Vitamin B12 import ATP-binding protein BtuD</fullName>
        <ecNumber evidence="1">7.6.2.8</ecNumber>
    </recommendedName>
    <alternativeName>
        <fullName evidence="1">Vitamin B12-transporting ATPase</fullName>
    </alternativeName>
</protein>
<name>BTUD_SHIDS</name>
<keyword id="KW-0067">ATP-binding</keyword>
<keyword id="KW-0997">Cell inner membrane</keyword>
<keyword id="KW-1003">Cell membrane</keyword>
<keyword id="KW-0472">Membrane</keyword>
<keyword id="KW-0547">Nucleotide-binding</keyword>
<keyword id="KW-1185">Reference proteome</keyword>
<keyword id="KW-1278">Translocase</keyword>
<keyword id="KW-0813">Transport</keyword>
<sequence>MSIVMQLQDVAESTRLGPLSGEVRAGEILHLVGPNGAGKSTLLARMAGMTSGKGSIQFAGQPLEAWSATKLALHRAYLSQQQTPPFAMPVWHYLTLHQHDKTRTELLNDVAGALALDDKLGRSTNQLSGGEWQRVRLAAVVLQITPQANPAGQLLLLDEPMNSLDVAQQSALDKILSALCQQGLAIVMSSHDLNHTLRHAHRAWLLKGGKMLASGRREEVLTPPNLAQAYGMNFRRLDIEGHRMLISTI</sequence>